<protein>
    <recommendedName>
        <fullName evidence="3">Epithelial sodium channel subunit beta</fullName>
    </recommendedName>
    <alternativeName>
        <fullName>Amiloride-sensitive sodium channel subunit beta</fullName>
    </alternativeName>
    <alternativeName>
        <fullName>Beta-NaCH</fullName>
    </alternativeName>
    <alternativeName>
        <fullName>Epithelial Na(+) channel subunit beta</fullName>
        <shortName>Beta-ENaC</shortName>
    </alternativeName>
    <alternativeName>
        <fullName>Nonvoltage-gated sodium channel 1 subunit beta</fullName>
    </alternativeName>
    <alternativeName>
        <fullName>SCNEB</fullName>
    </alternativeName>
</protein>
<feature type="chain" id="PRO_0000432888" description="Epithelial sodium channel subunit beta">
    <location>
        <begin position="1"/>
        <end position="641"/>
    </location>
</feature>
<feature type="topological domain" description="Cytoplasmic" evidence="1">
    <location>
        <begin position="1"/>
        <end position="50"/>
    </location>
</feature>
<feature type="transmembrane region" description="Helical; Name=1" evidence="5">
    <location>
        <begin position="51"/>
        <end position="71"/>
    </location>
</feature>
<feature type="topological domain" description="Extracellular" evidence="1">
    <location>
        <begin position="72"/>
        <end position="533"/>
    </location>
</feature>
<feature type="transmembrane region" description="Helical; Name=2" evidence="5">
    <location>
        <begin position="534"/>
        <end position="554"/>
    </location>
</feature>
<feature type="topological domain" description="Cytoplasmic" evidence="1">
    <location>
        <begin position="555"/>
        <end position="641"/>
    </location>
</feature>
<feature type="region of interest" description="Disordered" evidence="6">
    <location>
        <begin position="597"/>
        <end position="624"/>
    </location>
</feature>
<feature type="short sequence motif" description="PY motif; recruits WW domain-containing proteins and is thereby required for ubiquitination and inhibition of the channel by NEDD4 and NEDD4L" evidence="3">
    <location>
        <begin position="617"/>
        <end position="621"/>
    </location>
</feature>
<feature type="compositionally biased region" description="Pro residues" evidence="6">
    <location>
        <begin position="609"/>
        <end position="620"/>
    </location>
</feature>
<feature type="modified residue" description="Phosphoserine" evidence="4">
    <location>
        <position position="634"/>
    </location>
</feature>
<feature type="modified residue" description="Phosphoserine" evidence="4">
    <location>
        <position position="636"/>
    </location>
</feature>
<feature type="glycosylation site" description="N-linked (GlcNAc...) asparagine" evidence="5">
    <location>
        <position position="141"/>
    </location>
</feature>
<feature type="glycosylation site" description="N-linked (GlcNAc...) asparagine" evidence="5">
    <location>
        <position position="379"/>
    </location>
</feature>
<feature type="disulfide bond" evidence="3">
    <location>
        <begin position="98"/>
        <end position="273"/>
    </location>
</feature>
<feature type="disulfide bond" evidence="3">
    <location>
        <begin position="185"/>
        <end position="190"/>
    </location>
</feature>
<feature type="disulfide bond" evidence="3">
    <location>
        <begin position="197"/>
        <end position="204"/>
    </location>
</feature>
<feature type="disulfide bond" evidence="3">
    <location>
        <begin position="250"/>
        <end position="257"/>
    </location>
</feature>
<feature type="disulfide bond" evidence="3">
    <location>
        <begin position="362"/>
        <end position="449"/>
    </location>
</feature>
<feature type="disulfide bond" evidence="3">
    <location>
        <begin position="387"/>
        <end position="445"/>
    </location>
</feature>
<feature type="disulfide bond" evidence="3">
    <location>
        <begin position="391"/>
        <end position="441"/>
    </location>
</feature>
<feature type="disulfide bond" evidence="3">
    <location>
        <begin position="400"/>
        <end position="427"/>
    </location>
</feature>
<feature type="disulfide bond" evidence="3">
    <location>
        <begin position="402"/>
        <end position="416"/>
    </location>
</feature>
<evidence type="ECO:0000250" key="1">
    <source>
        <dbReference type="UniProtKB" id="P37089"/>
    </source>
</evidence>
<evidence type="ECO:0000250" key="2">
    <source>
        <dbReference type="UniProtKB" id="P37090"/>
    </source>
</evidence>
<evidence type="ECO:0000250" key="3">
    <source>
        <dbReference type="UniProtKB" id="P51168"/>
    </source>
</evidence>
<evidence type="ECO:0000250" key="4">
    <source>
        <dbReference type="UniProtKB" id="Q9WU38"/>
    </source>
</evidence>
<evidence type="ECO:0000255" key="5"/>
<evidence type="ECO:0000256" key="6">
    <source>
        <dbReference type="SAM" id="MobiDB-lite"/>
    </source>
</evidence>
<evidence type="ECO:0000305" key="7"/>
<accession>A5D7U4</accession>
<accession>F1MZB9</accession>
<reference key="1">
    <citation type="journal article" date="2009" name="Genome Biol.">
        <title>A whole-genome assembly of the domestic cow, Bos taurus.</title>
        <authorList>
            <person name="Zimin A.V."/>
            <person name="Delcher A.L."/>
            <person name="Florea L."/>
            <person name="Kelley D.R."/>
            <person name="Schatz M.C."/>
            <person name="Puiu D."/>
            <person name="Hanrahan F."/>
            <person name="Pertea G."/>
            <person name="Van Tassell C.P."/>
            <person name="Sonstegard T.S."/>
            <person name="Marcais G."/>
            <person name="Roberts M."/>
            <person name="Subramanian P."/>
            <person name="Yorke J.A."/>
            <person name="Salzberg S.L."/>
        </authorList>
    </citation>
    <scope>NUCLEOTIDE SEQUENCE [LARGE SCALE GENOMIC DNA]</scope>
    <source>
        <strain>Hereford</strain>
    </source>
</reference>
<reference key="2">
    <citation type="submission" date="2007-04" db="EMBL/GenBank/DDBJ databases">
        <authorList>
            <consortium name="NIH - Mammalian Gene Collection (MGC) project"/>
        </authorList>
    </citation>
    <scope>NUCLEOTIDE SEQUENCE [LARGE SCALE MRNA]</scope>
    <source>
        <strain>Hereford</strain>
        <tissue>Placenta</tissue>
    </source>
</reference>
<name>SCNNB_BOVIN</name>
<comment type="function">
    <text evidence="3">This is one of the three pore-forming subunits of the heterotrimeric epithelial sodium channel (ENaC), a critical regulator of sodium balance and fluid homeostasis. ENaC operates in epithelial tissues, where it mediates the electrodiffusion of sodium ions from extracellular fluid through the apical membrane of cells, with water following osmotically. It plays a key role in maintaining sodium homeostasis through electrogenic sodium reabsorption in the kidneys. Additionally, ENaC is essential for airway surface liquid homeostasis, which is crucial for proper mucus clearance.</text>
</comment>
<comment type="catalytic activity">
    <reaction evidence="3">
        <text>Na(+)(in) = Na(+)(out)</text>
        <dbReference type="Rhea" id="RHEA:34963"/>
        <dbReference type="ChEBI" id="CHEBI:29101"/>
    </reaction>
</comment>
<comment type="activity regulation">
    <text evidence="3">Originally identified and characterized by its inhibition by the diuretic drug amiloride.</text>
</comment>
<comment type="subunit">
    <text evidence="3">Component of the heterotrimeric epithelial sodium channel (ENaC) composed of an alpha/SCNN1A, a beta/SCNN1B and a gamma/SCNN1G subunit. An additional delta/SCNN1D subunit can replace the alpha/SCNN1A subunit to form an alternative channel with specific properties. Interacts with WWP1 (via WW domains). Interacts with WWP2 (via WW domains); inhibits the channel. Interacts with the full-length immature form of PCSK9 (pro-PCSK9). Interacts (N-glycosylated) with BPIFA1; the interaction is direct and inhibits the proteolytic processing of SCNN1A and SCNN1G and the activation of ENaC.</text>
</comment>
<comment type="subcellular location">
    <subcellularLocation>
        <location evidence="3">Apical cell membrane</location>
        <topology evidence="3">Multi-pass membrane protein</topology>
    </subcellularLocation>
    <subcellularLocation>
        <location evidence="2">Cytoplasmic vesicle membrane</location>
        <topology evidence="3">Multi-pass membrane protein</topology>
    </subcellularLocation>
</comment>
<comment type="PTM">
    <text evidence="2 3">Ubiquitinated. Can be ubiquitinated at multiple sites and undergo monoubiquitination and polyubiquitination. Ubiquitination by NEDD4 or NEDD4L inhibits the ENaC channel through endocytosis, intracellular retention and degradation of its individual subunits (By similarity). However, some studies could not confirm the ubiquitination of this subunit of the ENaC (By similarity).</text>
</comment>
<comment type="PTM">
    <text evidence="2">Phosphorylated on serine and threonine residues. Aldosterone and insulin increase the basal level of phosphorylation.</text>
</comment>
<comment type="PTM">
    <text evidence="3">N-glycosylated. N-glycosylation is required for interaction with BPIFA1.</text>
</comment>
<comment type="similarity">
    <text evidence="7">Belongs to the amiloride-sensitive sodium channel (TC 1.A.6) family. SCNN1B subfamily.</text>
</comment>
<sequence>MHVKKYLLKGLHRLQKGPGYTYKELLVWYCDNTNTHGPKRIICEGPKKKAMWFVLTLLFTSLVCWQWGLFIKTYLNWEVSVSLSIGFKTMDFPAVTICNASPFQYSKVQHLLKDLDELMEAVLGRILGPELSQVNDTRALNLSIWHHTPLVFINEQNPHHPVVLDLFEDNFNGSASNSPAPGRPCSAHRCKVAMRLCSHNGTTCTFRNFSSATQAVTEWYTLQATNIFAQVPNQELVAMGYPAERLILACLFGAEPCNYRNFTPIFHPDYGNCYIFNWGMTEKALPSANPGTEFGLKLILDMGQEDYVPFLTSTAGARLMLHEQRSYPFIKEEGIYAMAGMETSIGVLVDKLQRKGEPYSQCTKNGSDVPIQNLYSNYNTTYSIQACIRSCFQEHMIRECGCGHYLYPLPHKRKYCNNQEFPDWAHCYSALRISLAQRETCIYACKESCNDTQYKMTISMAVWPSEASEDWIFHVLSQERDQSSNITLSRKGIVKLNIYFQEFNYRTIEESAANNIVWLLSNLGGQFGFWMGGSVLCLIEFGEIIIDFVWITIIKLVALAKSVRQKRAQARYEGPPPTVAELVEAHTNFGFQPDLATPGPDVEAYPHEQNPPIPGTPPPNYDSLRLQPLDVIESDSEGDAI</sequence>
<proteinExistence type="evidence at transcript level"/>
<gene>
    <name evidence="3" type="primary">SCNN1B</name>
</gene>
<organism>
    <name type="scientific">Bos taurus</name>
    <name type="common">Bovine</name>
    <dbReference type="NCBI Taxonomy" id="9913"/>
    <lineage>
        <taxon>Eukaryota</taxon>
        <taxon>Metazoa</taxon>
        <taxon>Chordata</taxon>
        <taxon>Craniata</taxon>
        <taxon>Vertebrata</taxon>
        <taxon>Euteleostomi</taxon>
        <taxon>Mammalia</taxon>
        <taxon>Eutheria</taxon>
        <taxon>Laurasiatheria</taxon>
        <taxon>Artiodactyla</taxon>
        <taxon>Ruminantia</taxon>
        <taxon>Pecora</taxon>
        <taxon>Bovidae</taxon>
        <taxon>Bovinae</taxon>
        <taxon>Bos</taxon>
    </lineage>
</organism>
<keyword id="KW-1003">Cell membrane</keyword>
<keyword id="KW-0968">Cytoplasmic vesicle</keyword>
<keyword id="KW-1015">Disulfide bond</keyword>
<keyword id="KW-0325">Glycoprotein</keyword>
<keyword id="KW-0407">Ion channel</keyword>
<keyword id="KW-0406">Ion transport</keyword>
<keyword id="KW-0472">Membrane</keyword>
<keyword id="KW-0597">Phosphoprotein</keyword>
<keyword id="KW-1185">Reference proteome</keyword>
<keyword id="KW-0915">Sodium</keyword>
<keyword id="KW-0894">Sodium channel</keyword>
<keyword id="KW-0739">Sodium transport</keyword>
<keyword id="KW-0812">Transmembrane</keyword>
<keyword id="KW-1133">Transmembrane helix</keyword>
<keyword id="KW-0813">Transport</keyword>
<keyword id="KW-0832">Ubl conjugation</keyword>
<dbReference type="EMBL" id="DAAA02057753">
    <property type="status" value="NOT_ANNOTATED_CDS"/>
    <property type="molecule type" value="Genomic_DNA"/>
</dbReference>
<dbReference type="EMBL" id="BC140684">
    <property type="protein sequence ID" value="AAI40685.1"/>
    <property type="molecule type" value="mRNA"/>
</dbReference>
<dbReference type="RefSeq" id="NP_001091544.1">
    <property type="nucleotide sequence ID" value="NM_001098075.2"/>
</dbReference>
<dbReference type="SMR" id="A5D7U4"/>
<dbReference type="FunCoup" id="A5D7U4">
    <property type="interactions" value="82"/>
</dbReference>
<dbReference type="STRING" id="9913.ENSBTAP00000016301"/>
<dbReference type="GlyCosmos" id="A5D7U4">
    <property type="glycosylation" value="2 sites, No reported glycans"/>
</dbReference>
<dbReference type="GlyGen" id="A5D7U4">
    <property type="glycosylation" value="2 sites"/>
</dbReference>
<dbReference type="PaxDb" id="9913-ENSBTAP00000016301"/>
<dbReference type="GeneID" id="533355"/>
<dbReference type="KEGG" id="bta:533355"/>
<dbReference type="CTD" id="6338"/>
<dbReference type="VEuPathDB" id="HostDB:ENSBTAG00000012290"/>
<dbReference type="eggNOG" id="KOG4294">
    <property type="taxonomic scope" value="Eukaryota"/>
</dbReference>
<dbReference type="HOGENOM" id="CLU_020415_0_0_1"/>
<dbReference type="InParanoid" id="A5D7U4"/>
<dbReference type="OMA" id="QRETCIS"/>
<dbReference type="OrthoDB" id="6502088at2759"/>
<dbReference type="TreeFam" id="TF330663"/>
<dbReference type="Reactome" id="R-BTA-2672351">
    <property type="pathway name" value="Stimuli-sensing channels"/>
</dbReference>
<dbReference type="Reactome" id="R-BTA-9730628">
    <property type="pathway name" value="Sensory perception of salty taste"/>
</dbReference>
<dbReference type="Proteomes" id="UP000009136">
    <property type="component" value="Chromosome 25"/>
</dbReference>
<dbReference type="Bgee" id="ENSBTAG00000012290">
    <property type="expression patterns" value="Expressed in thyroid gland and 51 other cell types or tissues"/>
</dbReference>
<dbReference type="GO" id="GO:0016324">
    <property type="term" value="C:apical plasma membrane"/>
    <property type="evidence" value="ECO:0000250"/>
    <property type="project" value="UniProtKB"/>
</dbReference>
<dbReference type="GO" id="GO:0030659">
    <property type="term" value="C:cytoplasmic vesicle membrane"/>
    <property type="evidence" value="ECO:0007669"/>
    <property type="project" value="UniProtKB-SubCell"/>
</dbReference>
<dbReference type="GO" id="GO:0005886">
    <property type="term" value="C:plasma membrane"/>
    <property type="evidence" value="ECO:0000318"/>
    <property type="project" value="GO_Central"/>
</dbReference>
<dbReference type="GO" id="GO:0034706">
    <property type="term" value="C:sodium channel complex"/>
    <property type="evidence" value="ECO:0000318"/>
    <property type="project" value="GO_Central"/>
</dbReference>
<dbReference type="GO" id="GO:0015280">
    <property type="term" value="F:ligand-gated sodium channel activity"/>
    <property type="evidence" value="ECO:0000318"/>
    <property type="project" value="GO_Central"/>
</dbReference>
<dbReference type="GO" id="GO:0035725">
    <property type="term" value="P:sodium ion transmembrane transport"/>
    <property type="evidence" value="ECO:0000250"/>
    <property type="project" value="UniProtKB"/>
</dbReference>
<dbReference type="FunFam" id="2.60.470.10:FF:000003">
    <property type="entry name" value="Amiloride-sensitive sodium channel subunit beta"/>
    <property type="match status" value="1"/>
</dbReference>
<dbReference type="FunFam" id="1.10.287.770:FF:000002">
    <property type="entry name" value="Amiloride-sensitive sodium channel subunit beta 1"/>
    <property type="match status" value="1"/>
</dbReference>
<dbReference type="Gene3D" id="2.60.470.10">
    <property type="entry name" value="Acid-sensing ion channels like domains"/>
    <property type="match status" value="1"/>
</dbReference>
<dbReference type="Gene3D" id="1.10.287.770">
    <property type="entry name" value="YojJ-like"/>
    <property type="match status" value="1"/>
</dbReference>
<dbReference type="InterPro" id="IPR001873">
    <property type="entry name" value="ENaC"/>
</dbReference>
<dbReference type="InterPro" id="IPR004724">
    <property type="entry name" value="ENaC_chordates"/>
</dbReference>
<dbReference type="InterPro" id="IPR020903">
    <property type="entry name" value="ENaC_CS"/>
</dbReference>
<dbReference type="NCBIfam" id="TIGR00859">
    <property type="entry name" value="ENaC"/>
    <property type="match status" value="1"/>
</dbReference>
<dbReference type="PANTHER" id="PTHR11690:SF18">
    <property type="entry name" value="AMILORIDE-SENSITIVE SODIUM CHANNEL SUBUNIT BETA"/>
    <property type="match status" value="1"/>
</dbReference>
<dbReference type="PANTHER" id="PTHR11690">
    <property type="entry name" value="AMILORIDE-SENSITIVE SODIUM CHANNEL-RELATED"/>
    <property type="match status" value="1"/>
</dbReference>
<dbReference type="Pfam" id="PF00858">
    <property type="entry name" value="ASC"/>
    <property type="match status" value="1"/>
</dbReference>
<dbReference type="PRINTS" id="PR01078">
    <property type="entry name" value="AMINACHANNEL"/>
</dbReference>
<dbReference type="PROSITE" id="PS01206">
    <property type="entry name" value="ASC"/>
    <property type="match status" value="1"/>
</dbReference>